<proteinExistence type="inferred from homology"/>
<evidence type="ECO:0000255" key="1">
    <source>
        <dbReference type="HAMAP-Rule" id="MF_01571"/>
    </source>
</evidence>
<gene>
    <name evidence="1" type="primary">proS</name>
    <name type="ordered locus">Mevan_1574</name>
</gene>
<keyword id="KW-0030">Aminoacyl-tRNA synthetase</keyword>
<keyword id="KW-0067">ATP-binding</keyword>
<keyword id="KW-0963">Cytoplasm</keyword>
<keyword id="KW-0436">Ligase</keyword>
<keyword id="KW-0547">Nucleotide-binding</keyword>
<keyword id="KW-0648">Protein biosynthesis</keyword>
<reference key="1">
    <citation type="submission" date="2007-06" db="EMBL/GenBank/DDBJ databases">
        <title>Complete sequence of Methanococcus vannielii SB.</title>
        <authorList>
            <consortium name="US DOE Joint Genome Institute"/>
            <person name="Copeland A."/>
            <person name="Lucas S."/>
            <person name="Lapidus A."/>
            <person name="Barry K."/>
            <person name="Glavina del Rio T."/>
            <person name="Dalin E."/>
            <person name="Tice H."/>
            <person name="Pitluck S."/>
            <person name="Chain P."/>
            <person name="Malfatti S."/>
            <person name="Shin M."/>
            <person name="Vergez L."/>
            <person name="Schmutz J."/>
            <person name="Larimer F."/>
            <person name="Land M."/>
            <person name="Hauser L."/>
            <person name="Kyrpides N."/>
            <person name="Anderson I."/>
            <person name="Sieprawska-Lupa M."/>
            <person name="Whitman W.B."/>
            <person name="Richardson P."/>
        </authorList>
    </citation>
    <scope>NUCLEOTIDE SEQUENCE [LARGE SCALE GENOMIC DNA]</scope>
    <source>
        <strain>ATCC 35089 / DSM 1224 / JCM 13029 / OCM 148 / SB</strain>
    </source>
</reference>
<sequence length="461" mass="53496">MEFSEWYSEILEKAGIYDLRYPIKGCGVYLPYGFKIRRYSFEILRKLLDDTNHDETLFPMLIPENLLAKEGEHIKGFEDEVYWVTHGGKSPLEIKLALRPTSETTMYYMMKQWIKVHTDLPMKLYQVVNTFRYETKHTRPLIRLREIMSFKEAHTAHSTQDDCNKQIKEAIEIYGKFFDEICIPVIISKRPEWDKFPGADYTMAFDTIFPDGKTMQIGTVHNLGQNFAKTFELEFETPDGNKDYAYQTCYGISDRAIASLIAIHGDEKGLVIPIDVAPIQIVLIPLLFKGKEEIVIEKIKELSKILKTKYRVHVDDRDIRPGRKYNDWEIKGVPLRIEIGPRDIEEGKAVIVRRDNGQKMTVEAFNILNEVEKTFEDYKASLLQKATEKLEKYITVIENDKKDLLLLSEKVKFALSESKGIILVPYIESIYNEEFEGLIDASVLGLTTYNGKEYISIARTY</sequence>
<feature type="chain" id="PRO_0000318778" description="Proline--tRNA ligase">
    <location>
        <begin position="1"/>
        <end position="461"/>
    </location>
</feature>
<dbReference type="EC" id="6.1.1.15" evidence="1"/>
<dbReference type="EMBL" id="CP000742">
    <property type="protein sequence ID" value="ABR55466.1"/>
    <property type="molecule type" value="Genomic_DNA"/>
</dbReference>
<dbReference type="RefSeq" id="WP_012066380.1">
    <property type="nucleotide sequence ID" value="NC_009634.1"/>
</dbReference>
<dbReference type="SMR" id="A6USJ4"/>
<dbReference type="STRING" id="406327.Mevan_1574"/>
<dbReference type="GeneID" id="5325457"/>
<dbReference type="KEGG" id="mvn:Mevan_1574"/>
<dbReference type="eggNOG" id="arCOG00402">
    <property type="taxonomic scope" value="Archaea"/>
</dbReference>
<dbReference type="HOGENOM" id="CLU_001882_4_2_2"/>
<dbReference type="OrthoDB" id="7375at2157"/>
<dbReference type="Proteomes" id="UP000001107">
    <property type="component" value="Chromosome"/>
</dbReference>
<dbReference type="GO" id="GO:0017101">
    <property type="term" value="C:aminoacyl-tRNA synthetase multienzyme complex"/>
    <property type="evidence" value="ECO:0007669"/>
    <property type="project" value="TreeGrafter"/>
</dbReference>
<dbReference type="GO" id="GO:0005737">
    <property type="term" value="C:cytoplasm"/>
    <property type="evidence" value="ECO:0007669"/>
    <property type="project" value="UniProtKB-SubCell"/>
</dbReference>
<dbReference type="GO" id="GO:0005524">
    <property type="term" value="F:ATP binding"/>
    <property type="evidence" value="ECO:0007669"/>
    <property type="project" value="UniProtKB-UniRule"/>
</dbReference>
<dbReference type="GO" id="GO:0004827">
    <property type="term" value="F:proline-tRNA ligase activity"/>
    <property type="evidence" value="ECO:0007669"/>
    <property type="project" value="UniProtKB-UniRule"/>
</dbReference>
<dbReference type="GO" id="GO:0006433">
    <property type="term" value="P:prolyl-tRNA aminoacylation"/>
    <property type="evidence" value="ECO:0007669"/>
    <property type="project" value="UniProtKB-UniRule"/>
</dbReference>
<dbReference type="CDD" id="cd00778">
    <property type="entry name" value="ProRS_core_arch_euk"/>
    <property type="match status" value="1"/>
</dbReference>
<dbReference type="FunFam" id="3.30.930.10:FF:000037">
    <property type="entry name" value="Proline--tRNA ligase"/>
    <property type="match status" value="1"/>
</dbReference>
<dbReference type="Gene3D" id="3.40.50.800">
    <property type="entry name" value="Anticodon-binding domain"/>
    <property type="match status" value="1"/>
</dbReference>
<dbReference type="Gene3D" id="3.30.930.10">
    <property type="entry name" value="Bira Bifunctional Protein, Domain 2"/>
    <property type="match status" value="1"/>
</dbReference>
<dbReference type="Gene3D" id="3.30.110.30">
    <property type="entry name" value="C-terminal domain of ProRS"/>
    <property type="match status" value="1"/>
</dbReference>
<dbReference type="HAMAP" id="MF_01571">
    <property type="entry name" value="Pro_tRNA_synth_type3"/>
    <property type="match status" value="1"/>
</dbReference>
<dbReference type="InterPro" id="IPR002314">
    <property type="entry name" value="aa-tRNA-synt_IIb"/>
</dbReference>
<dbReference type="InterPro" id="IPR006195">
    <property type="entry name" value="aa-tRNA-synth_II"/>
</dbReference>
<dbReference type="InterPro" id="IPR045864">
    <property type="entry name" value="aa-tRNA-synth_II/BPL/LPL"/>
</dbReference>
<dbReference type="InterPro" id="IPR004154">
    <property type="entry name" value="Anticodon-bd"/>
</dbReference>
<dbReference type="InterPro" id="IPR036621">
    <property type="entry name" value="Anticodon-bd_dom_sf"/>
</dbReference>
<dbReference type="InterPro" id="IPR002316">
    <property type="entry name" value="Pro-tRNA-ligase_IIa"/>
</dbReference>
<dbReference type="InterPro" id="IPR004499">
    <property type="entry name" value="Pro-tRNA-ligase_IIa_arc-type"/>
</dbReference>
<dbReference type="InterPro" id="IPR017449">
    <property type="entry name" value="Pro-tRNA_synth_II"/>
</dbReference>
<dbReference type="InterPro" id="IPR015264">
    <property type="entry name" value="Pro-tRNA_synth_II_arc"/>
</dbReference>
<dbReference type="InterPro" id="IPR033721">
    <property type="entry name" value="ProRS_core_arch_euk"/>
</dbReference>
<dbReference type="NCBIfam" id="TIGR00408">
    <property type="entry name" value="proS_fam_I"/>
    <property type="match status" value="1"/>
</dbReference>
<dbReference type="PANTHER" id="PTHR43382:SF2">
    <property type="entry name" value="BIFUNCTIONAL GLUTAMATE_PROLINE--TRNA LIGASE"/>
    <property type="match status" value="1"/>
</dbReference>
<dbReference type="PANTHER" id="PTHR43382">
    <property type="entry name" value="PROLYL-TRNA SYNTHETASE"/>
    <property type="match status" value="1"/>
</dbReference>
<dbReference type="Pfam" id="PF03129">
    <property type="entry name" value="HGTP_anticodon"/>
    <property type="match status" value="1"/>
</dbReference>
<dbReference type="Pfam" id="PF09181">
    <property type="entry name" value="ProRS-C_2"/>
    <property type="match status" value="1"/>
</dbReference>
<dbReference type="Pfam" id="PF00587">
    <property type="entry name" value="tRNA-synt_2b"/>
    <property type="match status" value="1"/>
</dbReference>
<dbReference type="PRINTS" id="PR01046">
    <property type="entry name" value="TRNASYNTHPRO"/>
</dbReference>
<dbReference type="SUPFAM" id="SSF64586">
    <property type="entry name" value="C-terminal domain of ProRS"/>
    <property type="match status" value="1"/>
</dbReference>
<dbReference type="SUPFAM" id="SSF52954">
    <property type="entry name" value="Class II aaRS ABD-related"/>
    <property type="match status" value="1"/>
</dbReference>
<dbReference type="SUPFAM" id="SSF55681">
    <property type="entry name" value="Class II aaRS and biotin synthetases"/>
    <property type="match status" value="1"/>
</dbReference>
<dbReference type="PROSITE" id="PS50862">
    <property type="entry name" value="AA_TRNA_LIGASE_II"/>
    <property type="match status" value="1"/>
</dbReference>
<accession>A6USJ4</accession>
<name>SYP_METVS</name>
<organism>
    <name type="scientific">Methanococcus vannielii (strain ATCC 35089 / DSM 1224 / JCM 13029 / OCM 148 / SB)</name>
    <dbReference type="NCBI Taxonomy" id="406327"/>
    <lineage>
        <taxon>Archaea</taxon>
        <taxon>Methanobacteriati</taxon>
        <taxon>Methanobacteriota</taxon>
        <taxon>Methanomada group</taxon>
        <taxon>Methanococci</taxon>
        <taxon>Methanococcales</taxon>
        <taxon>Methanococcaceae</taxon>
        <taxon>Methanococcus</taxon>
    </lineage>
</organism>
<comment type="function">
    <text evidence="1">Catalyzes the attachment of proline to tRNA(Pro) in a two-step reaction: proline is first activated by ATP to form Pro-AMP and then transferred to the acceptor end of tRNA(Pro).</text>
</comment>
<comment type="catalytic activity">
    <reaction evidence="1">
        <text>tRNA(Pro) + L-proline + ATP = L-prolyl-tRNA(Pro) + AMP + diphosphate</text>
        <dbReference type="Rhea" id="RHEA:14305"/>
        <dbReference type="Rhea" id="RHEA-COMP:9700"/>
        <dbReference type="Rhea" id="RHEA-COMP:9702"/>
        <dbReference type="ChEBI" id="CHEBI:30616"/>
        <dbReference type="ChEBI" id="CHEBI:33019"/>
        <dbReference type="ChEBI" id="CHEBI:60039"/>
        <dbReference type="ChEBI" id="CHEBI:78442"/>
        <dbReference type="ChEBI" id="CHEBI:78532"/>
        <dbReference type="ChEBI" id="CHEBI:456215"/>
        <dbReference type="EC" id="6.1.1.15"/>
    </reaction>
</comment>
<comment type="subunit">
    <text evidence="1">Homodimer.</text>
</comment>
<comment type="subcellular location">
    <subcellularLocation>
        <location evidence="1">Cytoplasm</location>
    </subcellularLocation>
</comment>
<comment type="domain">
    <text evidence="1">Consists of three domains: the N-terminal catalytic domain, the anticodon-binding domain and the C-terminal extension.</text>
</comment>
<comment type="similarity">
    <text evidence="1">Belongs to the class-II aminoacyl-tRNA synthetase family. ProS type 3 subfamily.</text>
</comment>
<protein>
    <recommendedName>
        <fullName evidence="1">Proline--tRNA ligase</fullName>
        <ecNumber evidence="1">6.1.1.15</ecNumber>
    </recommendedName>
    <alternativeName>
        <fullName evidence="1">Prolyl-tRNA synthetase</fullName>
        <shortName evidence="1">ProRS</shortName>
    </alternativeName>
</protein>